<comment type="similarity">
    <text evidence="2">Belongs to the PRAME family. LRRC14 subfamily.</text>
</comment>
<comment type="caution">
    <text evidence="2">It is uncertain whether Met-1 or Met-4 is the initiator.</text>
</comment>
<accession>A6NHZ5</accession>
<keyword id="KW-0433">Leucine-rich repeat</keyword>
<keyword id="KW-1267">Proteomics identification</keyword>
<keyword id="KW-1185">Reference proteome</keyword>
<keyword id="KW-0677">Repeat</keyword>
<feature type="chain" id="PRO_0000344240" description="Leucine-rich repeat-containing protein 14B">
    <location>
        <begin position="1"/>
        <end position="514"/>
    </location>
</feature>
<feature type="repeat" description="LRR 1; degenerate" evidence="1">
    <location>
        <begin position="104"/>
        <end position="141"/>
    </location>
</feature>
<feature type="repeat" description="LRR 2; degenerate" evidence="1">
    <location>
        <begin position="185"/>
        <end position="209"/>
    </location>
</feature>
<feature type="repeat" description="LRR 4; degenerate" evidence="1">
    <location>
        <begin position="238"/>
        <end position="277"/>
    </location>
</feature>
<feature type="repeat" description="LRR 5" evidence="1">
    <location>
        <begin position="278"/>
        <end position="302"/>
    </location>
</feature>
<feature type="repeat" description="LRR 6" evidence="1">
    <location>
        <begin position="303"/>
        <end position="334"/>
    </location>
</feature>
<feature type="repeat" description="LRR 7" evidence="1">
    <location>
        <begin position="335"/>
        <end position="350"/>
    </location>
</feature>
<feature type="repeat" description="LRR 8" evidence="1">
    <location>
        <begin position="359"/>
        <end position="386"/>
    </location>
</feature>
<feature type="repeat" description="LRR 9" evidence="1">
    <location>
        <begin position="387"/>
        <end position="411"/>
    </location>
</feature>
<sequence length="514" mass="56758">MDTMRSLRFISAEALVSHPQVARQSLDSVAHNLYPLLFKASYLLEQAEVTRAVLGRWPLEEFRLGALLGPGADHPQDLRDRTCRACLEALVRGLADHVLQDRSRRRLRVADLTGIRDVQVQRCPCGRALGRWGRTQLLARTCCELQAEPLAAGRPVEVLADLFVTEGNFEAVVQALRPAGPAPLRVHCPSFRADSLSPSQLLHVLRLAGPGALRKLEVVHNVRLHAGHVQQLLAQVGFPRLASLTLPTKAFDAPPTYASTPDGEDPLLASIARELSKMAQLTELSVAFSTLTGKIPTLLGPLQTPLRVLDLANCALNHTDMAFLADCAHAAHLEVLDLSGHNLVSLYPSTFFRLLSQASRTLRILTLEECGIVDSHVGMLILGLSPCHRLRQLKFLGNPLSARALRRLFTALCELPELRCIEFPVPKDCYPEGAAYPQDELAMSKFNQQKYDEIAEELRAVLLRADREDIQVSTPLFGSFDPDIQETSNELGAFLLQAFKTALENFSRALKQIE</sequence>
<dbReference type="EMBL" id="AC021087">
    <property type="status" value="NOT_ANNOTATED_CDS"/>
    <property type="molecule type" value="Genomic_DNA"/>
</dbReference>
<dbReference type="CCDS" id="CCDS47184.1"/>
<dbReference type="RefSeq" id="NP_001073947.1">
    <property type="nucleotide sequence ID" value="NM_001080478.3"/>
</dbReference>
<dbReference type="SMR" id="A6NHZ5"/>
<dbReference type="BioGRID" id="133062">
    <property type="interactions" value="22"/>
</dbReference>
<dbReference type="FunCoup" id="A6NHZ5">
    <property type="interactions" value="455"/>
</dbReference>
<dbReference type="IntAct" id="A6NHZ5">
    <property type="interactions" value="5"/>
</dbReference>
<dbReference type="MINT" id="A6NHZ5"/>
<dbReference type="STRING" id="9606.ENSP00000327675"/>
<dbReference type="GlyGen" id="A6NHZ5">
    <property type="glycosylation" value="1 site, 1 O-linked glycan (1 site)"/>
</dbReference>
<dbReference type="iPTMnet" id="A6NHZ5"/>
<dbReference type="PhosphoSitePlus" id="A6NHZ5"/>
<dbReference type="SwissPalm" id="A6NHZ5"/>
<dbReference type="BioMuta" id="LRRC14B"/>
<dbReference type="MassIVE" id="A6NHZ5"/>
<dbReference type="PaxDb" id="9606-ENSP00000327675"/>
<dbReference type="PeptideAtlas" id="A6NHZ5"/>
<dbReference type="ProteomicsDB" id="1234"/>
<dbReference type="Antibodypedia" id="49983">
    <property type="antibodies" value="70 antibodies from 14 providers"/>
</dbReference>
<dbReference type="DNASU" id="389257"/>
<dbReference type="Ensembl" id="ENST00000328278.4">
    <property type="protein sequence ID" value="ENSP00000327675.3"/>
    <property type="gene ID" value="ENSG00000185028.4"/>
</dbReference>
<dbReference type="GeneID" id="389257"/>
<dbReference type="KEGG" id="hsa:389257"/>
<dbReference type="MANE-Select" id="ENST00000328278.4">
    <property type="protein sequence ID" value="ENSP00000327675.3"/>
    <property type="RefSeq nucleotide sequence ID" value="NM_001080478.3"/>
    <property type="RefSeq protein sequence ID" value="NP_001073947.1"/>
</dbReference>
<dbReference type="UCSC" id="uc003jal.1">
    <property type="organism name" value="human"/>
</dbReference>
<dbReference type="AGR" id="HGNC:37268"/>
<dbReference type="CTD" id="389257"/>
<dbReference type="GeneCards" id="LRRC14B"/>
<dbReference type="HGNC" id="HGNC:37268">
    <property type="gene designation" value="LRRC14B"/>
</dbReference>
<dbReference type="HPA" id="ENSG00000185028">
    <property type="expression patterns" value="Group enriched (heart muscle, skeletal muscle)"/>
</dbReference>
<dbReference type="neXtProt" id="NX_A6NHZ5"/>
<dbReference type="OpenTargets" id="ENSG00000185028"/>
<dbReference type="VEuPathDB" id="HostDB:ENSG00000185028"/>
<dbReference type="eggNOG" id="ENOG502QWSJ">
    <property type="taxonomic scope" value="Eukaryota"/>
</dbReference>
<dbReference type="GeneTree" id="ENSGT01030000234531"/>
<dbReference type="HOGENOM" id="CLU_039635_0_0_1"/>
<dbReference type="InParanoid" id="A6NHZ5"/>
<dbReference type="OMA" id="KACYLHE"/>
<dbReference type="OrthoDB" id="8875973at2759"/>
<dbReference type="PAN-GO" id="A6NHZ5">
    <property type="GO annotations" value="1 GO annotation based on evolutionary models"/>
</dbReference>
<dbReference type="PhylomeDB" id="A6NHZ5"/>
<dbReference type="TreeFam" id="TF332708"/>
<dbReference type="PathwayCommons" id="A6NHZ5"/>
<dbReference type="SignaLink" id="A6NHZ5"/>
<dbReference type="BioGRID-ORCS" id="389257">
    <property type="hits" value="16 hits in 1145 CRISPR screens"/>
</dbReference>
<dbReference type="GenomeRNAi" id="389257"/>
<dbReference type="Pharos" id="A6NHZ5">
    <property type="development level" value="Tdark"/>
</dbReference>
<dbReference type="PRO" id="PR:A6NHZ5"/>
<dbReference type="Proteomes" id="UP000005640">
    <property type="component" value="Chromosome 5"/>
</dbReference>
<dbReference type="RNAct" id="A6NHZ5">
    <property type="molecule type" value="protein"/>
</dbReference>
<dbReference type="Bgee" id="ENSG00000185028">
    <property type="expression patterns" value="Expressed in apex of heart and 49 other cell types or tissues"/>
</dbReference>
<dbReference type="FunFam" id="3.80.10.10:FF:000313">
    <property type="entry name" value="Leucine rich repeat containing 14B"/>
    <property type="match status" value="1"/>
</dbReference>
<dbReference type="Gene3D" id="3.80.10.10">
    <property type="entry name" value="Ribonuclease Inhibitor"/>
    <property type="match status" value="1"/>
</dbReference>
<dbReference type="InterPro" id="IPR032675">
    <property type="entry name" value="LRR_dom_sf"/>
</dbReference>
<dbReference type="InterPro" id="IPR050694">
    <property type="entry name" value="PRAME_domain"/>
</dbReference>
<dbReference type="PANTHER" id="PTHR14224:SF27">
    <property type="entry name" value="LEUCINE-RICH REPEAT-CONTAINING PROTEIN 14B"/>
    <property type="match status" value="1"/>
</dbReference>
<dbReference type="PANTHER" id="PTHR14224">
    <property type="entry name" value="SIMILAR TO PREFERENTIALLY EXPRESSED ANTIGEN IN MELANOMA-LIKE 3"/>
    <property type="match status" value="1"/>
</dbReference>
<dbReference type="SUPFAM" id="SSF52047">
    <property type="entry name" value="RNI-like"/>
    <property type="match status" value="1"/>
</dbReference>
<proteinExistence type="evidence at protein level"/>
<evidence type="ECO:0000250" key="1">
    <source>
        <dbReference type="UniProtKB" id="Q3UWY1"/>
    </source>
</evidence>
<evidence type="ECO:0000305" key="2"/>
<evidence type="ECO:0000312" key="3">
    <source>
        <dbReference type="HGNC" id="HGNC:37268"/>
    </source>
</evidence>
<organism>
    <name type="scientific">Homo sapiens</name>
    <name type="common">Human</name>
    <dbReference type="NCBI Taxonomy" id="9606"/>
    <lineage>
        <taxon>Eukaryota</taxon>
        <taxon>Metazoa</taxon>
        <taxon>Chordata</taxon>
        <taxon>Craniata</taxon>
        <taxon>Vertebrata</taxon>
        <taxon>Euteleostomi</taxon>
        <taxon>Mammalia</taxon>
        <taxon>Eutheria</taxon>
        <taxon>Euarchontoglires</taxon>
        <taxon>Primates</taxon>
        <taxon>Haplorrhini</taxon>
        <taxon>Catarrhini</taxon>
        <taxon>Hominidae</taxon>
        <taxon>Homo</taxon>
    </lineage>
</organism>
<gene>
    <name evidence="3" type="primary">LRRC14B</name>
</gene>
<reference key="1">
    <citation type="journal article" date="2004" name="Nature">
        <title>The DNA sequence and comparative analysis of human chromosome 5.</title>
        <authorList>
            <person name="Schmutz J."/>
            <person name="Martin J."/>
            <person name="Terry A."/>
            <person name="Couronne O."/>
            <person name="Grimwood J."/>
            <person name="Lowry S."/>
            <person name="Gordon L.A."/>
            <person name="Scott D."/>
            <person name="Xie G."/>
            <person name="Huang W."/>
            <person name="Hellsten U."/>
            <person name="Tran-Gyamfi M."/>
            <person name="She X."/>
            <person name="Prabhakar S."/>
            <person name="Aerts A."/>
            <person name="Altherr M."/>
            <person name="Bajorek E."/>
            <person name="Black S."/>
            <person name="Branscomb E."/>
            <person name="Caoile C."/>
            <person name="Challacombe J.F."/>
            <person name="Chan Y.M."/>
            <person name="Denys M."/>
            <person name="Detter J.C."/>
            <person name="Escobar J."/>
            <person name="Flowers D."/>
            <person name="Fotopulos D."/>
            <person name="Glavina T."/>
            <person name="Gomez M."/>
            <person name="Gonzales E."/>
            <person name="Goodstein D."/>
            <person name="Grigoriev I."/>
            <person name="Groza M."/>
            <person name="Hammon N."/>
            <person name="Hawkins T."/>
            <person name="Haydu L."/>
            <person name="Israni S."/>
            <person name="Jett J."/>
            <person name="Kadner K."/>
            <person name="Kimball H."/>
            <person name="Kobayashi A."/>
            <person name="Lopez F."/>
            <person name="Lou Y."/>
            <person name="Martinez D."/>
            <person name="Medina C."/>
            <person name="Morgan J."/>
            <person name="Nandkeshwar R."/>
            <person name="Noonan J.P."/>
            <person name="Pitluck S."/>
            <person name="Pollard M."/>
            <person name="Predki P."/>
            <person name="Priest J."/>
            <person name="Ramirez L."/>
            <person name="Retterer J."/>
            <person name="Rodriguez A."/>
            <person name="Rogers S."/>
            <person name="Salamov A."/>
            <person name="Salazar A."/>
            <person name="Thayer N."/>
            <person name="Tice H."/>
            <person name="Tsai M."/>
            <person name="Ustaszewska A."/>
            <person name="Vo N."/>
            <person name="Wheeler J."/>
            <person name="Wu K."/>
            <person name="Yang J."/>
            <person name="Dickson M."/>
            <person name="Cheng J.-F."/>
            <person name="Eichler E.E."/>
            <person name="Olsen A."/>
            <person name="Pennacchio L.A."/>
            <person name="Rokhsar D.S."/>
            <person name="Richardson P."/>
            <person name="Lucas S.M."/>
            <person name="Myers R.M."/>
            <person name="Rubin E.M."/>
        </authorList>
    </citation>
    <scope>NUCLEOTIDE SEQUENCE [LARGE SCALE GENOMIC DNA]</scope>
</reference>
<protein>
    <recommendedName>
        <fullName evidence="2">Leucine-rich repeat-containing protein 14B</fullName>
    </recommendedName>
</protein>
<name>LR14B_HUMAN</name>